<comment type="function">
    <text evidence="1">Catalyzes the interconversion of 2-phosphoglycerate and 3-phosphoglycerate.</text>
</comment>
<comment type="catalytic activity">
    <reaction evidence="1">
        <text>(2R)-2-phosphoglycerate = (2R)-3-phosphoglycerate</text>
        <dbReference type="Rhea" id="RHEA:15901"/>
        <dbReference type="ChEBI" id="CHEBI:58272"/>
        <dbReference type="ChEBI" id="CHEBI:58289"/>
        <dbReference type="EC" id="5.4.2.11"/>
    </reaction>
</comment>
<comment type="pathway">
    <text evidence="1">Carbohydrate degradation; glycolysis; pyruvate from D-glyceraldehyde 3-phosphate: step 3/5.</text>
</comment>
<comment type="subunit">
    <text evidence="1">Homodimer.</text>
</comment>
<comment type="similarity">
    <text evidence="1">Belongs to the phosphoglycerate mutase family. BPG-dependent PGAM subfamily.</text>
</comment>
<proteinExistence type="inferred from homology"/>
<protein>
    <recommendedName>
        <fullName evidence="1">2,3-bisphosphoglycerate-dependent phosphoglycerate mutase</fullName>
        <shortName evidence="1">BPG-dependent PGAM</shortName>
        <shortName evidence="1">PGAM</shortName>
        <shortName evidence="1">Phosphoglyceromutase</shortName>
        <shortName evidence="1">dPGM</shortName>
        <ecNumber evidence="1">5.4.2.11</ecNumber>
    </recommendedName>
</protein>
<dbReference type="EC" id="5.4.2.11" evidence="1"/>
<dbReference type="EMBL" id="CP001048">
    <property type="protein sequence ID" value="ACC88219.1"/>
    <property type="molecule type" value="Genomic_DNA"/>
</dbReference>
<dbReference type="RefSeq" id="WP_002210746.1">
    <property type="nucleotide sequence ID" value="NZ_CP009780.1"/>
</dbReference>
<dbReference type="SMR" id="B2K8R3"/>
<dbReference type="GeneID" id="57977273"/>
<dbReference type="KEGG" id="ypb:YPTS_1244"/>
<dbReference type="PATRIC" id="fig|502801.10.peg.593"/>
<dbReference type="UniPathway" id="UPA00109">
    <property type="reaction ID" value="UER00186"/>
</dbReference>
<dbReference type="GO" id="GO:0004619">
    <property type="term" value="F:phosphoglycerate mutase activity"/>
    <property type="evidence" value="ECO:0007669"/>
    <property type="project" value="UniProtKB-EC"/>
</dbReference>
<dbReference type="GO" id="GO:0006094">
    <property type="term" value="P:gluconeogenesis"/>
    <property type="evidence" value="ECO:0007669"/>
    <property type="project" value="UniProtKB-UniRule"/>
</dbReference>
<dbReference type="GO" id="GO:0006096">
    <property type="term" value="P:glycolytic process"/>
    <property type="evidence" value="ECO:0007669"/>
    <property type="project" value="UniProtKB-UniRule"/>
</dbReference>
<dbReference type="CDD" id="cd07067">
    <property type="entry name" value="HP_PGM_like"/>
    <property type="match status" value="1"/>
</dbReference>
<dbReference type="FunFam" id="3.40.50.1240:FF:000003">
    <property type="entry name" value="2,3-bisphosphoglycerate-dependent phosphoglycerate mutase"/>
    <property type="match status" value="1"/>
</dbReference>
<dbReference type="Gene3D" id="3.40.50.1240">
    <property type="entry name" value="Phosphoglycerate mutase-like"/>
    <property type="match status" value="1"/>
</dbReference>
<dbReference type="HAMAP" id="MF_01039">
    <property type="entry name" value="PGAM_GpmA"/>
    <property type="match status" value="1"/>
</dbReference>
<dbReference type="InterPro" id="IPR013078">
    <property type="entry name" value="His_Pase_superF_clade-1"/>
</dbReference>
<dbReference type="InterPro" id="IPR029033">
    <property type="entry name" value="His_PPase_superfam"/>
</dbReference>
<dbReference type="InterPro" id="IPR001345">
    <property type="entry name" value="PG/BPGM_mutase_AS"/>
</dbReference>
<dbReference type="InterPro" id="IPR005952">
    <property type="entry name" value="Phosphogly_mut1"/>
</dbReference>
<dbReference type="NCBIfam" id="TIGR01258">
    <property type="entry name" value="pgm_1"/>
    <property type="match status" value="1"/>
</dbReference>
<dbReference type="NCBIfam" id="NF010713">
    <property type="entry name" value="PRK14115.1"/>
    <property type="match status" value="1"/>
</dbReference>
<dbReference type="PANTHER" id="PTHR11931">
    <property type="entry name" value="PHOSPHOGLYCERATE MUTASE"/>
    <property type="match status" value="1"/>
</dbReference>
<dbReference type="Pfam" id="PF00300">
    <property type="entry name" value="His_Phos_1"/>
    <property type="match status" value="1"/>
</dbReference>
<dbReference type="PIRSF" id="PIRSF000709">
    <property type="entry name" value="6PFK_2-Ptase"/>
    <property type="match status" value="1"/>
</dbReference>
<dbReference type="SMART" id="SM00855">
    <property type="entry name" value="PGAM"/>
    <property type="match status" value="1"/>
</dbReference>
<dbReference type="SUPFAM" id="SSF53254">
    <property type="entry name" value="Phosphoglycerate mutase-like"/>
    <property type="match status" value="1"/>
</dbReference>
<dbReference type="PROSITE" id="PS00175">
    <property type="entry name" value="PG_MUTASE"/>
    <property type="match status" value="1"/>
</dbReference>
<name>GPMA_YERPB</name>
<organism>
    <name type="scientific">Yersinia pseudotuberculosis serotype IB (strain PB1/+)</name>
    <dbReference type="NCBI Taxonomy" id="502801"/>
    <lineage>
        <taxon>Bacteria</taxon>
        <taxon>Pseudomonadati</taxon>
        <taxon>Pseudomonadota</taxon>
        <taxon>Gammaproteobacteria</taxon>
        <taxon>Enterobacterales</taxon>
        <taxon>Yersiniaceae</taxon>
        <taxon>Yersinia</taxon>
    </lineage>
</organism>
<accession>B2K8R3</accession>
<sequence length="250" mass="28358">MAVTKLVLVRHGESQWNNENRFTGWYDVDLSEKGRSEAKAAGKLLKDEGFTFDFAYTSVLKRAIHTLWNILDELDQAWLPTEKTWKLNERHYGALQGLNKSETAEKYGDEQVKQWRRGFAITPPALEKSDERFPGHDPRYAKLTDAELPTTESLALTIERVIPYWNDVIKPRIASGERVIIAAHGNSLRALVKYLDDLGEDEILELNIPTGVPLVYEFDENFKPIKHYYLGNADEIAAKAAAVANQGKAK</sequence>
<feature type="chain" id="PRO_1000135996" description="2,3-bisphosphoglycerate-dependent phosphoglycerate mutase">
    <location>
        <begin position="1"/>
        <end position="250"/>
    </location>
</feature>
<feature type="active site" description="Tele-phosphohistidine intermediate" evidence="1">
    <location>
        <position position="11"/>
    </location>
</feature>
<feature type="active site" description="Proton donor/acceptor" evidence="1">
    <location>
        <position position="89"/>
    </location>
</feature>
<feature type="binding site" evidence="1">
    <location>
        <begin position="10"/>
        <end position="17"/>
    </location>
    <ligand>
        <name>substrate</name>
    </ligand>
</feature>
<feature type="binding site" evidence="1">
    <location>
        <begin position="23"/>
        <end position="24"/>
    </location>
    <ligand>
        <name>substrate</name>
    </ligand>
</feature>
<feature type="binding site" evidence="1">
    <location>
        <position position="62"/>
    </location>
    <ligand>
        <name>substrate</name>
    </ligand>
</feature>
<feature type="binding site" evidence="1">
    <location>
        <begin position="89"/>
        <end position="92"/>
    </location>
    <ligand>
        <name>substrate</name>
    </ligand>
</feature>
<feature type="binding site" evidence="1">
    <location>
        <position position="100"/>
    </location>
    <ligand>
        <name>substrate</name>
    </ligand>
</feature>
<feature type="binding site" evidence="1">
    <location>
        <begin position="116"/>
        <end position="117"/>
    </location>
    <ligand>
        <name>substrate</name>
    </ligand>
</feature>
<feature type="binding site" evidence="1">
    <location>
        <begin position="185"/>
        <end position="186"/>
    </location>
    <ligand>
        <name>substrate</name>
    </ligand>
</feature>
<feature type="site" description="Transition state stabilizer" evidence="1">
    <location>
        <position position="184"/>
    </location>
</feature>
<reference key="1">
    <citation type="submission" date="2008-04" db="EMBL/GenBank/DDBJ databases">
        <title>Complete sequence of Yersinia pseudotuberculosis PB1/+.</title>
        <authorList>
            <person name="Copeland A."/>
            <person name="Lucas S."/>
            <person name="Lapidus A."/>
            <person name="Glavina del Rio T."/>
            <person name="Dalin E."/>
            <person name="Tice H."/>
            <person name="Bruce D."/>
            <person name="Goodwin L."/>
            <person name="Pitluck S."/>
            <person name="Munk A.C."/>
            <person name="Brettin T."/>
            <person name="Detter J.C."/>
            <person name="Han C."/>
            <person name="Tapia R."/>
            <person name="Schmutz J."/>
            <person name="Larimer F."/>
            <person name="Land M."/>
            <person name="Hauser L."/>
            <person name="Challacombe J.F."/>
            <person name="Green L."/>
            <person name="Lindler L.E."/>
            <person name="Nikolich M.P."/>
            <person name="Richardson P."/>
        </authorList>
    </citation>
    <scope>NUCLEOTIDE SEQUENCE [LARGE SCALE GENOMIC DNA]</scope>
    <source>
        <strain>PB1/+</strain>
    </source>
</reference>
<evidence type="ECO:0000255" key="1">
    <source>
        <dbReference type="HAMAP-Rule" id="MF_01039"/>
    </source>
</evidence>
<keyword id="KW-0312">Gluconeogenesis</keyword>
<keyword id="KW-0324">Glycolysis</keyword>
<keyword id="KW-0413">Isomerase</keyword>
<gene>
    <name evidence="1" type="primary">gpmA</name>
    <name type="ordered locus">YPTS_1244</name>
</gene>